<keyword id="KW-1185">Reference proteome</keyword>
<keyword id="KW-0678">Repressor</keyword>
<keyword id="KW-0687">Ribonucleoprotein</keyword>
<keyword id="KW-0689">Ribosomal protein</keyword>
<keyword id="KW-0694">RNA-binding</keyword>
<keyword id="KW-0699">rRNA-binding</keyword>
<keyword id="KW-0810">Translation regulation</keyword>
<keyword id="KW-0820">tRNA-binding</keyword>
<feature type="chain" id="PRO_0000125801" description="Large ribosomal subunit protein uL1">
    <location>
        <begin position="1"/>
        <end position="213"/>
    </location>
</feature>
<comment type="function">
    <text evidence="1">Binds directly to 23S rRNA. Probably involved in E site tRNA release.</text>
</comment>
<comment type="function">
    <text evidence="1">Protein L1 is also a translational repressor protein, it controls the translation of its operon by binding to its mRNA.</text>
</comment>
<comment type="subunit">
    <text evidence="1">Part of the 50S ribosomal subunit.</text>
</comment>
<comment type="similarity">
    <text evidence="1">Belongs to the universal ribosomal protein uL1 family.</text>
</comment>
<protein>
    <recommendedName>
        <fullName evidence="1">Large ribosomal subunit protein uL1</fullName>
    </recommendedName>
    <alternativeName>
        <fullName evidence="2">50S ribosomal protein L1</fullName>
    </alternativeName>
</protein>
<gene>
    <name evidence="1" type="primary">rpl1</name>
    <name type="synonym">rplA</name>
    <name type="ordered locus">MMP0260</name>
</gene>
<reference key="1">
    <citation type="journal article" date="2004" name="J. Bacteriol.">
        <title>Complete genome sequence of the genetically tractable hydrogenotrophic methanogen Methanococcus maripaludis.</title>
        <authorList>
            <person name="Hendrickson E.L."/>
            <person name="Kaul R."/>
            <person name="Zhou Y."/>
            <person name="Bovee D."/>
            <person name="Chapman P."/>
            <person name="Chung J."/>
            <person name="Conway de Macario E."/>
            <person name="Dodsworth J.A."/>
            <person name="Gillett W."/>
            <person name="Graham D.E."/>
            <person name="Hackett M."/>
            <person name="Haydock A.K."/>
            <person name="Kang A."/>
            <person name="Land M.L."/>
            <person name="Levy R."/>
            <person name="Lie T.J."/>
            <person name="Major T.A."/>
            <person name="Moore B.C."/>
            <person name="Porat I."/>
            <person name="Palmeiri A."/>
            <person name="Rouse G."/>
            <person name="Saenphimmachak C."/>
            <person name="Soell D."/>
            <person name="Van Dien S."/>
            <person name="Wang T."/>
            <person name="Whitman W.B."/>
            <person name="Xia Q."/>
            <person name="Zhang Y."/>
            <person name="Larimer F.W."/>
            <person name="Olson M.V."/>
            <person name="Leigh J.A."/>
        </authorList>
    </citation>
    <scope>NUCLEOTIDE SEQUENCE [LARGE SCALE GENOMIC DNA]</scope>
    <source>
        <strain>DSM 14266 / JCM 13030 / NBRC 101832 / S2 / LL</strain>
    </source>
</reference>
<dbReference type="EMBL" id="BX950229">
    <property type="protein sequence ID" value="CAF29816.1"/>
    <property type="molecule type" value="Genomic_DNA"/>
</dbReference>
<dbReference type="RefSeq" id="WP_011170204.1">
    <property type="nucleotide sequence ID" value="NC_005791.1"/>
</dbReference>
<dbReference type="SMR" id="Q6M0L0"/>
<dbReference type="STRING" id="267377.MMP0260"/>
<dbReference type="EnsemblBacteria" id="CAF29816">
    <property type="protein sequence ID" value="CAF29816"/>
    <property type="gene ID" value="MMP0260"/>
</dbReference>
<dbReference type="KEGG" id="mmp:MMP0260"/>
<dbReference type="PATRIC" id="fig|267377.15.peg.262"/>
<dbReference type="eggNOG" id="arCOG04289">
    <property type="taxonomic scope" value="Archaea"/>
</dbReference>
<dbReference type="HOGENOM" id="CLU_062853_4_0_2"/>
<dbReference type="OrthoDB" id="10382at2157"/>
<dbReference type="Proteomes" id="UP000000590">
    <property type="component" value="Chromosome"/>
</dbReference>
<dbReference type="GO" id="GO:0015934">
    <property type="term" value="C:large ribosomal subunit"/>
    <property type="evidence" value="ECO:0007669"/>
    <property type="project" value="InterPro"/>
</dbReference>
<dbReference type="GO" id="GO:0019843">
    <property type="term" value="F:rRNA binding"/>
    <property type="evidence" value="ECO:0007669"/>
    <property type="project" value="UniProtKB-UniRule"/>
</dbReference>
<dbReference type="GO" id="GO:0003735">
    <property type="term" value="F:structural constituent of ribosome"/>
    <property type="evidence" value="ECO:0007669"/>
    <property type="project" value="InterPro"/>
</dbReference>
<dbReference type="GO" id="GO:0000049">
    <property type="term" value="F:tRNA binding"/>
    <property type="evidence" value="ECO:0007669"/>
    <property type="project" value="UniProtKB-KW"/>
</dbReference>
<dbReference type="GO" id="GO:0006417">
    <property type="term" value="P:regulation of translation"/>
    <property type="evidence" value="ECO:0007669"/>
    <property type="project" value="UniProtKB-KW"/>
</dbReference>
<dbReference type="GO" id="GO:0006412">
    <property type="term" value="P:translation"/>
    <property type="evidence" value="ECO:0007669"/>
    <property type="project" value="UniProtKB-UniRule"/>
</dbReference>
<dbReference type="CDD" id="cd00403">
    <property type="entry name" value="Ribosomal_L1"/>
    <property type="match status" value="1"/>
</dbReference>
<dbReference type="FunFam" id="3.40.50.790:FF:000005">
    <property type="entry name" value="50S ribosomal protein L1"/>
    <property type="match status" value="1"/>
</dbReference>
<dbReference type="Gene3D" id="3.30.190.20">
    <property type="match status" value="1"/>
</dbReference>
<dbReference type="Gene3D" id="3.40.50.790">
    <property type="match status" value="1"/>
</dbReference>
<dbReference type="HAMAP" id="MF_01318_A">
    <property type="entry name" value="Ribosomal_uL1_A"/>
    <property type="match status" value="1"/>
</dbReference>
<dbReference type="InterPro" id="IPR002143">
    <property type="entry name" value="Ribosomal_uL1"/>
</dbReference>
<dbReference type="InterPro" id="IPR023674">
    <property type="entry name" value="Ribosomal_uL1-like"/>
</dbReference>
<dbReference type="InterPro" id="IPR028364">
    <property type="entry name" value="Ribosomal_uL1/biogenesis"/>
</dbReference>
<dbReference type="InterPro" id="IPR016095">
    <property type="entry name" value="Ribosomal_uL1_3-a/b-sand"/>
</dbReference>
<dbReference type="InterPro" id="IPR023669">
    <property type="entry name" value="Ribosomal_uL1_arc"/>
</dbReference>
<dbReference type="InterPro" id="IPR023673">
    <property type="entry name" value="Ribosomal_uL1_CS"/>
</dbReference>
<dbReference type="NCBIfam" id="NF003244">
    <property type="entry name" value="PRK04203.1"/>
    <property type="match status" value="1"/>
</dbReference>
<dbReference type="PANTHER" id="PTHR36427">
    <property type="entry name" value="54S RIBOSOMAL PROTEIN L1, MITOCHONDRIAL"/>
    <property type="match status" value="1"/>
</dbReference>
<dbReference type="PANTHER" id="PTHR36427:SF3">
    <property type="entry name" value="LARGE RIBOSOMAL SUBUNIT PROTEIN UL1M"/>
    <property type="match status" value="1"/>
</dbReference>
<dbReference type="Pfam" id="PF00687">
    <property type="entry name" value="Ribosomal_L1"/>
    <property type="match status" value="1"/>
</dbReference>
<dbReference type="PIRSF" id="PIRSF002155">
    <property type="entry name" value="Ribosomal_L1"/>
    <property type="match status" value="1"/>
</dbReference>
<dbReference type="SUPFAM" id="SSF56808">
    <property type="entry name" value="Ribosomal protein L1"/>
    <property type="match status" value="1"/>
</dbReference>
<dbReference type="PROSITE" id="PS01199">
    <property type="entry name" value="RIBOSOMAL_L1"/>
    <property type="match status" value="1"/>
</dbReference>
<accession>Q6M0L0</accession>
<proteinExistence type="inferred from homology"/>
<name>RL1_METMP</name>
<evidence type="ECO:0000255" key="1">
    <source>
        <dbReference type="HAMAP-Rule" id="MF_01318"/>
    </source>
</evidence>
<evidence type="ECO:0000305" key="2"/>
<sequence>MDSEKILNAVKEARTLAKPRNFTQSVDLIVNLKELDLSRPENRLKEQIVLPSGRGKDVAIAVIAKGDLAAQAEDMGLTVIRQEELEELGKNKKTAKKIANAHGFFIAQADMMPLVGKSLGPVLGPRGKMPQPVPANANLAPLVARFQKTVAINTRDKALFQVYIGTESMSDDELAANAEAILNVVSKKYEKGLYHVKNAFTKLTMGAAAPIEK</sequence>
<organism>
    <name type="scientific">Methanococcus maripaludis (strain DSM 14266 / JCM 13030 / NBRC 101832 / S2 / LL)</name>
    <dbReference type="NCBI Taxonomy" id="267377"/>
    <lineage>
        <taxon>Archaea</taxon>
        <taxon>Methanobacteriati</taxon>
        <taxon>Methanobacteriota</taxon>
        <taxon>Methanomada group</taxon>
        <taxon>Methanococci</taxon>
        <taxon>Methanococcales</taxon>
        <taxon>Methanococcaceae</taxon>
        <taxon>Methanococcus</taxon>
    </lineage>
</organism>